<keyword id="KW-1185">Reference proteome</keyword>
<keyword id="KW-0687">Ribonucleoprotein</keyword>
<keyword id="KW-0689">Ribosomal protein</keyword>
<keyword id="KW-0694">RNA-binding</keyword>
<keyword id="KW-0699">rRNA-binding</keyword>
<feature type="chain" id="PRO_1000214993" description="Large ribosomal subunit protein uL14">
    <location>
        <begin position="1"/>
        <end position="122"/>
    </location>
</feature>
<protein>
    <recommendedName>
        <fullName evidence="1">Large ribosomal subunit protein uL14</fullName>
    </recommendedName>
    <alternativeName>
        <fullName evidence="2">50S ribosomal protein L14</fullName>
    </alternativeName>
</protein>
<accession>C5BQ71</accession>
<comment type="function">
    <text evidence="1">Binds to 23S rRNA. Forms part of two intersubunit bridges in the 70S ribosome.</text>
</comment>
<comment type="subunit">
    <text evidence="1">Part of the 50S ribosomal subunit. Forms a cluster with proteins L3 and L19. In the 70S ribosome, L14 and L19 interact and together make contacts with the 16S rRNA in bridges B5 and B8.</text>
</comment>
<comment type="similarity">
    <text evidence="1">Belongs to the universal ribosomal protein uL14 family.</text>
</comment>
<organism>
    <name type="scientific">Teredinibacter turnerae (strain ATCC 39867 / T7901)</name>
    <dbReference type="NCBI Taxonomy" id="377629"/>
    <lineage>
        <taxon>Bacteria</taxon>
        <taxon>Pseudomonadati</taxon>
        <taxon>Pseudomonadota</taxon>
        <taxon>Gammaproteobacteria</taxon>
        <taxon>Cellvibrionales</taxon>
        <taxon>Cellvibrionaceae</taxon>
        <taxon>Teredinibacter</taxon>
    </lineage>
</organism>
<sequence length="122" mass="13402">MIQTETYLDVADNSGARRVMCIKVLGGSHRRYAGVGDVIKVTVKEAIPRGKVKKGQVMKAVVVRTKKGVRRPDGSLIRFDDNAAVLLNNQEAPVGTRIFGPVTRELRGEKFMKIISLAPEVL</sequence>
<gene>
    <name evidence="1" type="primary">rplN</name>
    <name type="ordered locus">TERTU_0918</name>
</gene>
<dbReference type="EMBL" id="CP001614">
    <property type="protein sequence ID" value="ACR10925.1"/>
    <property type="molecule type" value="Genomic_DNA"/>
</dbReference>
<dbReference type="RefSeq" id="WP_015817037.1">
    <property type="nucleotide sequence ID" value="NC_012997.1"/>
</dbReference>
<dbReference type="SMR" id="C5BQ71"/>
<dbReference type="STRING" id="377629.TERTU_0918"/>
<dbReference type="KEGG" id="ttu:TERTU_0918"/>
<dbReference type="eggNOG" id="COG0093">
    <property type="taxonomic scope" value="Bacteria"/>
</dbReference>
<dbReference type="HOGENOM" id="CLU_095071_2_1_6"/>
<dbReference type="OrthoDB" id="9806379at2"/>
<dbReference type="Proteomes" id="UP000009080">
    <property type="component" value="Chromosome"/>
</dbReference>
<dbReference type="GO" id="GO:0022625">
    <property type="term" value="C:cytosolic large ribosomal subunit"/>
    <property type="evidence" value="ECO:0007669"/>
    <property type="project" value="TreeGrafter"/>
</dbReference>
<dbReference type="GO" id="GO:0070180">
    <property type="term" value="F:large ribosomal subunit rRNA binding"/>
    <property type="evidence" value="ECO:0007669"/>
    <property type="project" value="TreeGrafter"/>
</dbReference>
<dbReference type="GO" id="GO:0003735">
    <property type="term" value="F:structural constituent of ribosome"/>
    <property type="evidence" value="ECO:0007669"/>
    <property type="project" value="InterPro"/>
</dbReference>
<dbReference type="GO" id="GO:0006412">
    <property type="term" value="P:translation"/>
    <property type="evidence" value="ECO:0007669"/>
    <property type="project" value="UniProtKB-UniRule"/>
</dbReference>
<dbReference type="CDD" id="cd00337">
    <property type="entry name" value="Ribosomal_uL14"/>
    <property type="match status" value="1"/>
</dbReference>
<dbReference type="FunFam" id="2.40.150.20:FF:000001">
    <property type="entry name" value="50S ribosomal protein L14"/>
    <property type="match status" value="1"/>
</dbReference>
<dbReference type="Gene3D" id="2.40.150.20">
    <property type="entry name" value="Ribosomal protein L14"/>
    <property type="match status" value="1"/>
</dbReference>
<dbReference type="HAMAP" id="MF_01367">
    <property type="entry name" value="Ribosomal_uL14"/>
    <property type="match status" value="1"/>
</dbReference>
<dbReference type="InterPro" id="IPR000218">
    <property type="entry name" value="Ribosomal_uL14"/>
</dbReference>
<dbReference type="InterPro" id="IPR005745">
    <property type="entry name" value="Ribosomal_uL14_bac-type"/>
</dbReference>
<dbReference type="InterPro" id="IPR019972">
    <property type="entry name" value="Ribosomal_uL14_CS"/>
</dbReference>
<dbReference type="InterPro" id="IPR036853">
    <property type="entry name" value="Ribosomal_uL14_sf"/>
</dbReference>
<dbReference type="NCBIfam" id="TIGR01067">
    <property type="entry name" value="rplN_bact"/>
    <property type="match status" value="1"/>
</dbReference>
<dbReference type="PANTHER" id="PTHR11761">
    <property type="entry name" value="50S/60S RIBOSOMAL PROTEIN L14/L23"/>
    <property type="match status" value="1"/>
</dbReference>
<dbReference type="PANTHER" id="PTHR11761:SF3">
    <property type="entry name" value="LARGE RIBOSOMAL SUBUNIT PROTEIN UL14M"/>
    <property type="match status" value="1"/>
</dbReference>
<dbReference type="Pfam" id="PF00238">
    <property type="entry name" value="Ribosomal_L14"/>
    <property type="match status" value="1"/>
</dbReference>
<dbReference type="SMART" id="SM01374">
    <property type="entry name" value="Ribosomal_L14"/>
    <property type="match status" value="1"/>
</dbReference>
<dbReference type="SUPFAM" id="SSF50193">
    <property type="entry name" value="Ribosomal protein L14"/>
    <property type="match status" value="1"/>
</dbReference>
<dbReference type="PROSITE" id="PS00049">
    <property type="entry name" value="RIBOSOMAL_L14"/>
    <property type="match status" value="1"/>
</dbReference>
<proteinExistence type="inferred from homology"/>
<evidence type="ECO:0000255" key="1">
    <source>
        <dbReference type="HAMAP-Rule" id="MF_01367"/>
    </source>
</evidence>
<evidence type="ECO:0000305" key="2"/>
<name>RL14_TERTT</name>
<reference key="1">
    <citation type="journal article" date="2009" name="PLoS ONE">
        <title>The complete genome of Teredinibacter turnerae T7901: an intracellular endosymbiont of marine wood-boring bivalves (shipworms).</title>
        <authorList>
            <person name="Yang J.C."/>
            <person name="Madupu R."/>
            <person name="Durkin A.S."/>
            <person name="Ekborg N.A."/>
            <person name="Pedamallu C.S."/>
            <person name="Hostetler J.B."/>
            <person name="Radune D."/>
            <person name="Toms B.S."/>
            <person name="Henrissat B."/>
            <person name="Coutinho P.M."/>
            <person name="Schwarz S."/>
            <person name="Field L."/>
            <person name="Trindade-Silva A.E."/>
            <person name="Soares C.A.G."/>
            <person name="Elshahawi S."/>
            <person name="Hanora A."/>
            <person name="Schmidt E.W."/>
            <person name="Haygood M.G."/>
            <person name="Posfai J."/>
            <person name="Benner J."/>
            <person name="Madinger C."/>
            <person name="Nove J."/>
            <person name="Anton B."/>
            <person name="Chaudhary K."/>
            <person name="Foster J."/>
            <person name="Holman A."/>
            <person name="Kumar S."/>
            <person name="Lessard P.A."/>
            <person name="Luyten Y.A."/>
            <person name="Slatko B."/>
            <person name="Wood N."/>
            <person name="Wu B."/>
            <person name="Teplitski M."/>
            <person name="Mougous J.D."/>
            <person name="Ward N."/>
            <person name="Eisen J.A."/>
            <person name="Badger J.H."/>
            <person name="Distel D.L."/>
        </authorList>
    </citation>
    <scope>NUCLEOTIDE SEQUENCE [LARGE SCALE GENOMIC DNA]</scope>
    <source>
        <strain>ATCC 39867 / T7901</strain>
    </source>
</reference>